<reference key="1">
    <citation type="journal article" date="1998" name="Science">
        <title>Complete genome sequence of Treponema pallidum, the syphilis spirochete.</title>
        <authorList>
            <person name="Fraser C.M."/>
            <person name="Norris S.J."/>
            <person name="Weinstock G.M."/>
            <person name="White O."/>
            <person name="Sutton G.G."/>
            <person name="Dodson R.J."/>
            <person name="Gwinn M.L."/>
            <person name="Hickey E.K."/>
            <person name="Clayton R.A."/>
            <person name="Ketchum K.A."/>
            <person name="Sodergren E."/>
            <person name="Hardham J.M."/>
            <person name="McLeod M.P."/>
            <person name="Salzberg S.L."/>
            <person name="Peterson J.D."/>
            <person name="Khalak H.G."/>
            <person name="Richardson D.L."/>
            <person name="Howell J.K."/>
            <person name="Chidambaram M."/>
            <person name="Utterback T.R."/>
            <person name="McDonald L.A."/>
            <person name="Artiach P."/>
            <person name="Bowman C."/>
            <person name="Cotton M.D."/>
            <person name="Fujii C."/>
            <person name="Garland S.A."/>
            <person name="Hatch B."/>
            <person name="Horst K."/>
            <person name="Roberts K.M."/>
            <person name="Sandusky M."/>
            <person name="Weidman J.F."/>
            <person name="Smith H.O."/>
            <person name="Venter J.C."/>
        </authorList>
    </citation>
    <scope>NUCLEOTIDE SEQUENCE [LARGE SCALE GENOMIC DNA]</scope>
    <source>
        <strain>Nichols</strain>
    </source>
</reference>
<proteinExistence type="inferred from homology"/>
<organism>
    <name type="scientific">Treponema pallidum (strain Nichols)</name>
    <dbReference type="NCBI Taxonomy" id="243276"/>
    <lineage>
        <taxon>Bacteria</taxon>
        <taxon>Pseudomonadati</taxon>
        <taxon>Spirochaetota</taxon>
        <taxon>Spirochaetia</taxon>
        <taxon>Spirochaetales</taxon>
        <taxon>Treponemataceae</taxon>
        <taxon>Treponema</taxon>
    </lineage>
</organism>
<comment type="function">
    <text evidence="1">A type II topoisomerase that negatively supercoils closed circular double-stranded (ds) DNA in an ATP-dependent manner to modulate DNA topology and maintain chromosomes in an underwound state. Negative supercoiling favors strand separation, and DNA replication, transcription, recombination and repair, all of which involve strand separation. Also able to catalyze the interconversion of other topological isomers of dsDNA rings, including catenanes and knotted rings. Type II topoisomerases break and join 2 DNA strands simultaneously in an ATP-dependent manner.</text>
</comment>
<comment type="catalytic activity">
    <reaction evidence="1">
        <text>ATP-dependent breakage, passage and rejoining of double-stranded DNA.</text>
        <dbReference type="EC" id="5.6.2.2"/>
    </reaction>
</comment>
<comment type="subunit">
    <text evidence="1">Heterotetramer, composed of two GyrA and two GyrB chains. In the heterotetramer, GyrA contains the active site tyrosine that forms a transient covalent intermediate with DNA, while GyrB binds cofactors and catalyzes ATP hydrolysis.</text>
</comment>
<comment type="subcellular location">
    <subcellularLocation>
        <location evidence="1">Cytoplasm</location>
    </subcellularLocation>
</comment>
<comment type="miscellaneous">
    <text evidence="1">Few gyrases are as efficient as E.coli at forming negative supercoils. Not all organisms have 2 type II topoisomerases; in organisms with a single type II topoisomerase this enzyme also has to decatenate newly replicated chromosomes.</text>
</comment>
<comment type="similarity">
    <text evidence="1">Belongs to the type II topoisomerase GyrA/ParC subunit family.</text>
</comment>
<sequence>MEEISTPEGGVLVPISIETEVKRAYIDYSMSVIVSRALPDVRDGLKPVHRRILYAMEEKGLRFSGPTRKCAKIVGDVLGSFHPHGDASVYDALVRLGQDFSLRYPVIHPQGNFGTIGGDPPAAYRYTEAKMARIAESMVEDIKKETVSFVPNFDDSDVEPTVLPGRFPFLLANGSSGIAVGMTTNMPPHNLREIAAAISAYIENPNLSIQELCDCINGPDFPTGGIIFGKNGIRQSYETGRGKIVVRARFTIETDSKGRDTIIFTEVPYQVNTTMLVMRIGELARAKVIEGIANVNDETSDRTGLRIVVELKKGTPAQVVLNHLFAKTPLQSSFNVINLALVEGRPRMLTLKDLVRYFVEHRVDVVTRRAHFELRKAQERIHLVRALIRALDAIDKIITLIRHSQNTELAKQRLREQFDFDNVQAQAIVDMQMKRLTGLEVESLRTELKDLTELISSLEELLTSPQKVLGVVKKETRDIADMFGDDRRTDIVSNEIEYLDVEDFIQKEEMVILISHLGYIKRVPVSAYRNQNRGGKGSSSANLAAHDFISQIFTASTHDYVMFVTSRGRAYWLKVYGIPESGRANRGSHIKSLLMVATDEEITAIVSLREFSNKSYVFMATARGVVKKVTTDNFVNAKTRGIIALKLSGGDTLVSAVLVQDEDEVMLITRQGKALRMSGREVREMGRNSSGVIGIKLTSEDLVAGVLRVSEQRKVLIMTENGYGKRVSFSEFSVHGRGTAGQKIYTQTDRKGAIIGALAVLDTDECMCITGQGKTIRVDVCAISVLGRGAQGVRVLDIEPSDLVVGLSCVMQG</sequence>
<evidence type="ECO:0000255" key="1">
    <source>
        <dbReference type="HAMAP-Rule" id="MF_01897"/>
    </source>
</evidence>
<evidence type="ECO:0000255" key="2">
    <source>
        <dbReference type="PROSITE-ProRule" id="PRU01384"/>
    </source>
</evidence>
<gene>
    <name evidence="1" type="primary">gyrA</name>
    <name type="ordered locus">TP_0005</name>
</gene>
<protein>
    <recommendedName>
        <fullName evidence="1">DNA gyrase subunit A</fullName>
        <ecNumber evidence="1">5.6.2.2</ecNumber>
    </recommendedName>
</protein>
<name>GYRA_TREPA</name>
<accession>O83051</accession>
<keyword id="KW-0046">Antibiotic resistance</keyword>
<keyword id="KW-0067">ATP-binding</keyword>
<keyword id="KW-0963">Cytoplasm</keyword>
<keyword id="KW-0238">DNA-binding</keyword>
<keyword id="KW-0413">Isomerase</keyword>
<keyword id="KW-0547">Nucleotide-binding</keyword>
<keyword id="KW-1185">Reference proteome</keyword>
<keyword id="KW-0799">Topoisomerase</keyword>
<feature type="chain" id="PRO_0000145271" description="DNA gyrase subunit A">
    <location>
        <begin position="1"/>
        <end position="813"/>
    </location>
</feature>
<feature type="domain" description="Topo IIA-type catalytic" evidence="2">
    <location>
        <begin position="38"/>
        <end position="504"/>
    </location>
</feature>
<feature type="short sequence motif" description="GyrA-box" evidence="1">
    <location>
        <begin position="531"/>
        <end position="537"/>
    </location>
</feature>
<feature type="active site" description="O-(5'-phospho-DNA)-tyrosine intermediate" evidence="1">
    <location>
        <position position="126"/>
    </location>
</feature>
<dbReference type="EC" id="5.6.2.2" evidence="1"/>
<dbReference type="EMBL" id="AE000520">
    <property type="protein sequence ID" value="AAC64998.1"/>
    <property type="molecule type" value="Genomic_DNA"/>
</dbReference>
<dbReference type="PIR" id="D71378">
    <property type="entry name" value="D71378"/>
</dbReference>
<dbReference type="RefSeq" id="WP_010881455.1">
    <property type="nucleotide sequence ID" value="NC_021490.2"/>
</dbReference>
<dbReference type="SMR" id="O83051"/>
<dbReference type="IntAct" id="O83051">
    <property type="interactions" value="9"/>
</dbReference>
<dbReference type="STRING" id="243276.TP_0005"/>
<dbReference type="EnsemblBacteria" id="AAC64998">
    <property type="protein sequence ID" value="AAC64998"/>
    <property type="gene ID" value="TP_0005"/>
</dbReference>
<dbReference type="GeneID" id="93875805"/>
<dbReference type="KEGG" id="tpa:TP_0005"/>
<dbReference type="KEGG" id="tpw:TPANIC_0005"/>
<dbReference type="eggNOG" id="COG0188">
    <property type="taxonomic scope" value="Bacteria"/>
</dbReference>
<dbReference type="HOGENOM" id="CLU_002977_6_1_12"/>
<dbReference type="OrthoDB" id="9806486at2"/>
<dbReference type="Proteomes" id="UP000000811">
    <property type="component" value="Chromosome"/>
</dbReference>
<dbReference type="GO" id="GO:0005694">
    <property type="term" value="C:chromosome"/>
    <property type="evidence" value="ECO:0007669"/>
    <property type="project" value="InterPro"/>
</dbReference>
<dbReference type="GO" id="GO:0005737">
    <property type="term" value="C:cytoplasm"/>
    <property type="evidence" value="ECO:0007669"/>
    <property type="project" value="UniProtKB-SubCell"/>
</dbReference>
<dbReference type="GO" id="GO:0009330">
    <property type="term" value="C:DNA topoisomerase type II (double strand cut, ATP-hydrolyzing) complex"/>
    <property type="evidence" value="ECO:0007669"/>
    <property type="project" value="TreeGrafter"/>
</dbReference>
<dbReference type="GO" id="GO:0005524">
    <property type="term" value="F:ATP binding"/>
    <property type="evidence" value="ECO:0007669"/>
    <property type="project" value="UniProtKB-UniRule"/>
</dbReference>
<dbReference type="GO" id="GO:0003677">
    <property type="term" value="F:DNA binding"/>
    <property type="evidence" value="ECO:0007669"/>
    <property type="project" value="UniProtKB-UniRule"/>
</dbReference>
<dbReference type="GO" id="GO:0034335">
    <property type="term" value="F:DNA negative supercoiling activity"/>
    <property type="evidence" value="ECO:0007669"/>
    <property type="project" value="UniProtKB-ARBA"/>
</dbReference>
<dbReference type="GO" id="GO:0006265">
    <property type="term" value="P:DNA topological change"/>
    <property type="evidence" value="ECO:0007669"/>
    <property type="project" value="UniProtKB-UniRule"/>
</dbReference>
<dbReference type="GO" id="GO:0006261">
    <property type="term" value="P:DNA-templated DNA replication"/>
    <property type="evidence" value="ECO:0007669"/>
    <property type="project" value="UniProtKB-UniRule"/>
</dbReference>
<dbReference type="GO" id="GO:0046677">
    <property type="term" value="P:response to antibiotic"/>
    <property type="evidence" value="ECO:0007669"/>
    <property type="project" value="UniProtKB-KW"/>
</dbReference>
<dbReference type="CDD" id="cd00187">
    <property type="entry name" value="TOP4c"/>
    <property type="match status" value="1"/>
</dbReference>
<dbReference type="FunFam" id="1.10.268.10:FF:000001">
    <property type="entry name" value="DNA gyrase subunit A"/>
    <property type="match status" value="1"/>
</dbReference>
<dbReference type="FunFam" id="3.30.1360.40:FF:000002">
    <property type="entry name" value="DNA gyrase subunit A"/>
    <property type="match status" value="1"/>
</dbReference>
<dbReference type="FunFam" id="2.120.10.90:FF:000005">
    <property type="entry name" value="DNA topoisomerase 4 subunit A"/>
    <property type="match status" value="1"/>
</dbReference>
<dbReference type="Gene3D" id="3.30.1360.40">
    <property type="match status" value="1"/>
</dbReference>
<dbReference type="Gene3D" id="2.120.10.90">
    <property type="entry name" value="DNA gyrase/topoisomerase IV, subunit A, C-terminal"/>
    <property type="match status" value="1"/>
</dbReference>
<dbReference type="Gene3D" id="3.90.199.10">
    <property type="entry name" value="Topoisomerase II, domain 5"/>
    <property type="match status" value="1"/>
</dbReference>
<dbReference type="Gene3D" id="1.10.268.10">
    <property type="entry name" value="Topoisomerase, domain 3"/>
    <property type="match status" value="1"/>
</dbReference>
<dbReference type="HAMAP" id="MF_01897">
    <property type="entry name" value="GyrA"/>
    <property type="match status" value="1"/>
</dbReference>
<dbReference type="InterPro" id="IPR005743">
    <property type="entry name" value="GyrA"/>
</dbReference>
<dbReference type="InterPro" id="IPR006691">
    <property type="entry name" value="GyrA/parC_rep"/>
</dbReference>
<dbReference type="InterPro" id="IPR035516">
    <property type="entry name" value="Gyrase/topoIV_suA_C"/>
</dbReference>
<dbReference type="InterPro" id="IPR013760">
    <property type="entry name" value="Topo_IIA-like_dom_sf"/>
</dbReference>
<dbReference type="InterPro" id="IPR013758">
    <property type="entry name" value="Topo_IIA_A/C_ab"/>
</dbReference>
<dbReference type="InterPro" id="IPR013757">
    <property type="entry name" value="Topo_IIA_A_a_sf"/>
</dbReference>
<dbReference type="InterPro" id="IPR002205">
    <property type="entry name" value="Topo_IIA_dom_A"/>
</dbReference>
<dbReference type="InterPro" id="IPR050220">
    <property type="entry name" value="Type_II_DNA_Topoisomerases"/>
</dbReference>
<dbReference type="NCBIfam" id="TIGR01063">
    <property type="entry name" value="gyrA"/>
    <property type="match status" value="1"/>
</dbReference>
<dbReference type="NCBIfam" id="NF004043">
    <property type="entry name" value="PRK05560.1"/>
    <property type="match status" value="1"/>
</dbReference>
<dbReference type="NCBIfam" id="NF004044">
    <property type="entry name" value="PRK05561.1"/>
    <property type="match status" value="1"/>
</dbReference>
<dbReference type="PANTHER" id="PTHR43493:SF5">
    <property type="entry name" value="DNA GYRASE SUBUNIT A, CHLOROPLASTIC_MITOCHONDRIAL"/>
    <property type="match status" value="1"/>
</dbReference>
<dbReference type="PANTHER" id="PTHR43493">
    <property type="entry name" value="DNA GYRASE/TOPOISOMERASE SUBUNIT A"/>
    <property type="match status" value="1"/>
</dbReference>
<dbReference type="Pfam" id="PF03989">
    <property type="entry name" value="DNA_gyraseA_C"/>
    <property type="match status" value="6"/>
</dbReference>
<dbReference type="Pfam" id="PF00521">
    <property type="entry name" value="DNA_topoisoIV"/>
    <property type="match status" value="1"/>
</dbReference>
<dbReference type="SMART" id="SM00434">
    <property type="entry name" value="TOP4c"/>
    <property type="match status" value="1"/>
</dbReference>
<dbReference type="SUPFAM" id="SSF101904">
    <property type="entry name" value="GyrA/ParC C-terminal domain-like"/>
    <property type="match status" value="1"/>
</dbReference>
<dbReference type="SUPFAM" id="SSF56719">
    <property type="entry name" value="Type II DNA topoisomerase"/>
    <property type="match status" value="1"/>
</dbReference>
<dbReference type="PROSITE" id="PS52040">
    <property type="entry name" value="TOPO_IIA"/>
    <property type="match status" value="1"/>
</dbReference>